<reference key="1">
    <citation type="journal article" date="2004" name="Proc. Natl. Acad. Sci. U.S.A.">
        <title>The complete genomic sequence of Nocardia farcinica IFM 10152.</title>
        <authorList>
            <person name="Ishikawa J."/>
            <person name="Yamashita A."/>
            <person name="Mikami Y."/>
            <person name="Hoshino Y."/>
            <person name="Kurita H."/>
            <person name="Hotta K."/>
            <person name="Shiba T."/>
            <person name="Hattori M."/>
        </authorList>
    </citation>
    <scope>NUCLEOTIDE SEQUENCE [LARGE SCALE GENOMIC DNA]</scope>
    <source>
        <strain>IFM 10152</strain>
    </source>
</reference>
<dbReference type="EMBL" id="AP006618">
    <property type="protein sequence ID" value="BAD59966.1"/>
    <property type="molecule type" value="Genomic_DNA"/>
</dbReference>
<dbReference type="RefSeq" id="WP_011211648.1">
    <property type="nucleotide sequence ID" value="NC_006361.1"/>
</dbReference>
<dbReference type="SMR" id="Q5YPC5"/>
<dbReference type="STRING" id="247156.NFA_51140"/>
<dbReference type="GeneID" id="61135688"/>
<dbReference type="KEGG" id="nfa:NFA_51140"/>
<dbReference type="eggNOG" id="COG0081">
    <property type="taxonomic scope" value="Bacteria"/>
</dbReference>
<dbReference type="HOGENOM" id="CLU_062853_0_0_11"/>
<dbReference type="OrthoDB" id="9803740at2"/>
<dbReference type="Proteomes" id="UP000006820">
    <property type="component" value="Chromosome"/>
</dbReference>
<dbReference type="GO" id="GO:0015934">
    <property type="term" value="C:large ribosomal subunit"/>
    <property type="evidence" value="ECO:0007669"/>
    <property type="project" value="InterPro"/>
</dbReference>
<dbReference type="GO" id="GO:0019843">
    <property type="term" value="F:rRNA binding"/>
    <property type="evidence" value="ECO:0007669"/>
    <property type="project" value="UniProtKB-UniRule"/>
</dbReference>
<dbReference type="GO" id="GO:0003735">
    <property type="term" value="F:structural constituent of ribosome"/>
    <property type="evidence" value="ECO:0007669"/>
    <property type="project" value="InterPro"/>
</dbReference>
<dbReference type="GO" id="GO:0000049">
    <property type="term" value="F:tRNA binding"/>
    <property type="evidence" value="ECO:0007669"/>
    <property type="project" value="UniProtKB-KW"/>
</dbReference>
<dbReference type="GO" id="GO:0006417">
    <property type="term" value="P:regulation of translation"/>
    <property type="evidence" value="ECO:0007669"/>
    <property type="project" value="UniProtKB-KW"/>
</dbReference>
<dbReference type="GO" id="GO:0006412">
    <property type="term" value="P:translation"/>
    <property type="evidence" value="ECO:0007669"/>
    <property type="project" value="UniProtKB-UniRule"/>
</dbReference>
<dbReference type="CDD" id="cd00403">
    <property type="entry name" value="Ribosomal_L1"/>
    <property type="match status" value="1"/>
</dbReference>
<dbReference type="FunFam" id="3.40.50.790:FF:000001">
    <property type="entry name" value="50S ribosomal protein L1"/>
    <property type="match status" value="1"/>
</dbReference>
<dbReference type="Gene3D" id="3.30.190.20">
    <property type="match status" value="1"/>
</dbReference>
<dbReference type="Gene3D" id="3.40.50.790">
    <property type="match status" value="1"/>
</dbReference>
<dbReference type="HAMAP" id="MF_01318_B">
    <property type="entry name" value="Ribosomal_uL1_B"/>
    <property type="match status" value="1"/>
</dbReference>
<dbReference type="InterPro" id="IPR005878">
    <property type="entry name" value="Ribosom_uL1_bac-type"/>
</dbReference>
<dbReference type="InterPro" id="IPR002143">
    <property type="entry name" value="Ribosomal_uL1"/>
</dbReference>
<dbReference type="InterPro" id="IPR023674">
    <property type="entry name" value="Ribosomal_uL1-like"/>
</dbReference>
<dbReference type="InterPro" id="IPR028364">
    <property type="entry name" value="Ribosomal_uL1/biogenesis"/>
</dbReference>
<dbReference type="InterPro" id="IPR016095">
    <property type="entry name" value="Ribosomal_uL1_3-a/b-sand"/>
</dbReference>
<dbReference type="InterPro" id="IPR023673">
    <property type="entry name" value="Ribosomal_uL1_CS"/>
</dbReference>
<dbReference type="NCBIfam" id="TIGR01169">
    <property type="entry name" value="rplA_bact"/>
    <property type="match status" value="1"/>
</dbReference>
<dbReference type="PANTHER" id="PTHR36427">
    <property type="entry name" value="54S RIBOSOMAL PROTEIN L1, MITOCHONDRIAL"/>
    <property type="match status" value="1"/>
</dbReference>
<dbReference type="PANTHER" id="PTHR36427:SF3">
    <property type="entry name" value="LARGE RIBOSOMAL SUBUNIT PROTEIN UL1M"/>
    <property type="match status" value="1"/>
</dbReference>
<dbReference type="Pfam" id="PF00687">
    <property type="entry name" value="Ribosomal_L1"/>
    <property type="match status" value="1"/>
</dbReference>
<dbReference type="PIRSF" id="PIRSF002155">
    <property type="entry name" value="Ribosomal_L1"/>
    <property type="match status" value="1"/>
</dbReference>
<dbReference type="SUPFAM" id="SSF56808">
    <property type="entry name" value="Ribosomal protein L1"/>
    <property type="match status" value="1"/>
</dbReference>
<dbReference type="PROSITE" id="PS01199">
    <property type="entry name" value="RIBOSOMAL_L1"/>
    <property type="match status" value="1"/>
</dbReference>
<feature type="chain" id="PRO_0000125701" description="Large ribosomal subunit protein uL1">
    <location>
        <begin position="1"/>
        <end position="237"/>
    </location>
</feature>
<sequence length="237" mass="25062">MAKRSKAYLAAAEKVDRTKLYSPLAAARLAKETATTKTDATVEVAVRLGVDPRKADQMVRGTVNLPHGTGKTARVIVFAAGEKAAEAEAAGADAVGAEDLIERIQGGWLDFDAAIATPDQMAKVGRIARVLGPRGLMPNPKTGTVTTDVAKAVSDIKGGKINFRVDKQANLHFVIGKASFDEAKLVENYGAALDEILRAKPSTAKGRYVKKVTVSTNTGPGIPVDPNRTRNLLDEDA</sequence>
<keyword id="KW-1185">Reference proteome</keyword>
<keyword id="KW-0678">Repressor</keyword>
<keyword id="KW-0687">Ribonucleoprotein</keyword>
<keyword id="KW-0689">Ribosomal protein</keyword>
<keyword id="KW-0694">RNA-binding</keyword>
<keyword id="KW-0699">rRNA-binding</keyword>
<keyword id="KW-0810">Translation regulation</keyword>
<keyword id="KW-0820">tRNA-binding</keyword>
<accession>Q5YPC5</accession>
<organism>
    <name type="scientific">Nocardia farcinica (strain IFM 10152)</name>
    <dbReference type="NCBI Taxonomy" id="247156"/>
    <lineage>
        <taxon>Bacteria</taxon>
        <taxon>Bacillati</taxon>
        <taxon>Actinomycetota</taxon>
        <taxon>Actinomycetes</taxon>
        <taxon>Mycobacteriales</taxon>
        <taxon>Nocardiaceae</taxon>
        <taxon>Nocardia</taxon>
    </lineage>
</organism>
<protein>
    <recommendedName>
        <fullName evidence="1">Large ribosomal subunit protein uL1</fullName>
    </recommendedName>
    <alternativeName>
        <fullName evidence="2">50S ribosomal protein L1</fullName>
    </alternativeName>
</protein>
<comment type="function">
    <text evidence="1">Binds directly to 23S rRNA. The L1 stalk is quite mobile in the ribosome, and is involved in E site tRNA release.</text>
</comment>
<comment type="function">
    <text evidence="1">Protein L1 is also a translational repressor protein, it controls the translation of the L11 operon by binding to its mRNA.</text>
</comment>
<comment type="subunit">
    <text evidence="1">Part of the 50S ribosomal subunit.</text>
</comment>
<comment type="similarity">
    <text evidence="1">Belongs to the universal ribosomal protein uL1 family.</text>
</comment>
<name>RL1_NOCFA</name>
<gene>
    <name evidence="1" type="primary">rplA</name>
    <name type="ordered locus">NFA_51140</name>
</gene>
<evidence type="ECO:0000255" key="1">
    <source>
        <dbReference type="HAMAP-Rule" id="MF_01318"/>
    </source>
</evidence>
<evidence type="ECO:0000305" key="2"/>
<proteinExistence type="inferred from homology"/>